<dbReference type="EMBL" id="MF370932">
    <property type="protein sequence ID" value="AST36439.1"/>
    <property type="molecule type" value="Genomic_DNA"/>
</dbReference>
<dbReference type="GO" id="GO:0005829">
    <property type="term" value="C:cytosol"/>
    <property type="evidence" value="ECO:0007669"/>
    <property type="project" value="TreeGrafter"/>
</dbReference>
<dbReference type="GO" id="GO:0016020">
    <property type="term" value="C:membrane"/>
    <property type="evidence" value="ECO:0007669"/>
    <property type="project" value="TreeGrafter"/>
</dbReference>
<dbReference type="GO" id="GO:1902387">
    <property type="term" value="F:ceramide 1-phosphate binding"/>
    <property type="evidence" value="ECO:0007669"/>
    <property type="project" value="TreeGrafter"/>
</dbReference>
<dbReference type="GO" id="GO:1902388">
    <property type="term" value="F:ceramide 1-phosphate transfer activity"/>
    <property type="evidence" value="ECO:0007669"/>
    <property type="project" value="TreeGrafter"/>
</dbReference>
<dbReference type="FunFam" id="1.10.3520.10:FF:000001">
    <property type="entry name" value="Pleckstrin domain-containing family A member 8"/>
    <property type="match status" value="1"/>
</dbReference>
<dbReference type="Gene3D" id="1.10.3520.10">
    <property type="entry name" value="Glycolipid transfer protein"/>
    <property type="match status" value="1"/>
</dbReference>
<dbReference type="InterPro" id="IPR036497">
    <property type="entry name" value="GLTP_sf"/>
</dbReference>
<dbReference type="InterPro" id="IPR014830">
    <property type="entry name" value="Glycolipid_transfer_prot_dom"/>
</dbReference>
<dbReference type="PANTHER" id="PTHR10219">
    <property type="entry name" value="GLYCOLIPID TRANSFER PROTEIN-RELATED"/>
    <property type="match status" value="1"/>
</dbReference>
<dbReference type="PANTHER" id="PTHR10219:SF25">
    <property type="entry name" value="PLECKSTRIN HOMOLOGY DOMAIN-CONTAINING FAMILY A MEMBER 8"/>
    <property type="match status" value="1"/>
</dbReference>
<dbReference type="Pfam" id="PF08718">
    <property type="entry name" value="GLTP"/>
    <property type="match status" value="1"/>
</dbReference>
<dbReference type="SUPFAM" id="SSF110004">
    <property type="entry name" value="Glycolipid transfer protein, GLTP"/>
    <property type="match status" value="1"/>
</dbReference>
<accession>A0A223HDI2</accession>
<comment type="function">
    <text evidence="4">Cargo transport protein that plays a key role in transport and secretion of liamocins, glycolipids (also called heavy oils) composed of a single mannitol or arabitol headgroup linked to either three, four or even six 3,5-dihydroxydecanoic ester tail-groups.</text>
</comment>
<comment type="induction">
    <text evidence="5">Expression is regulated by the cAMP-PKA and HOG1 signaling pathways via the transcriptional activator MSN2.</text>
</comment>
<comment type="disruption phenotype">
    <text evidence="4">Partially loses the ability to secrete liamocins and leads swollen cells and accumulation of intracellular lipids.</text>
</comment>
<comment type="biotechnology">
    <text evidence="2 3">Liamocins have high bioactivity against the pathogenic bacteria Streptococcus spp. and can be potential new specific inhibitors of oral streptococcal biofilms without affecting normal oral microflora (PubMed:30627519). Liamocins are also able to inhibit human cancer cell lines such as breast cancer cell lines T47D and SK-BR3 or the cervical cancer cell line HeLa (PubMed:21293903).</text>
</comment>
<evidence type="ECO:0000250" key="1">
    <source>
        <dbReference type="UniProtKB" id="Q80W71"/>
    </source>
</evidence>
<evidence type="ECO:0000269" key="2">
    <source>
    </source>
</evidence>
<evidence type="ECO:0000269" key="3">
    <source>
    </source>
</evidence>
<evidence type="ECO:0000269" key="4">
    <source>
    </source>
</evidence>
<evidence type="ECO:0000269" key="5">
    <source>
    </source>
</evidence>
<evidence type="ECO:0000303" key="6">
    <source>
    </source>
</evidence>
<feature type="chain" id="PRO_0000461625" description="Glycolipid transfer protein">
    <location>
        <begin position="1"/>
        <end position="201"/>
    </location>
</feature>
<feature type="region of interest" description="Glycolipid transfer protein homology domain" evidence="1">
    <location>
        <begin position="28"/>
        <end position="168"/>
    </location>
</feature>
<organism>
    <name type="scientific">Aureobasidium melanogenum</name>
    <name type="common">Aureobasidium pullulans var. melanogenum</name>
    <dbReference type="NCBI Taxonomy" id="46634"/>
    <lineage>
        <taxon>Eukaryota</taxon>
        <taxon>Fungi</taxon>
        <taxon>Dikarya</taxon>
        <taxon>Ascomycota</taxon>
        <taxon>Pezizomycotina</taxon>
        <taxon>Dothideomycetes</taxon>
        <taxon>Dothideomycetidae</taxon>
        <taxon>Dothideales</taxon>
        <taxon>Saccotheciaceae</taxon>
        <taxon>Aureobasidium</taxon>
    </lineage>
</organism>
<keyword id="KW-0445">Lipid transport</keyword>
<keyword id="KW-0446">Lipid-binding</keyword>
<keyword id="KW-0813">Transport</keyword>
<sequence length="201" mass="22316">MAAFPPGGTFFDTLKRSFTDVPVESGKIATTQFLEACESLTTLFDVLGSTAFKPVKSDMTGNIKKIRDRQLAAPVDSETLQDLVRNELATKKHTATEGLVWLNRALDFTAQALRQNLTNSGEEVSVSFRSAYGNTLSKHHSFMIKPIFSAAMSATPYRKDFYAKLGDDQARVEKELGVWLSSLENIVKILNDFLASKEAKW</sequence>
<protein>
    <recommendedName>
        <fullName evidence="6">Glycolipid transfer protein</fullName>
    </recommendedName>
</protein>
<proteinExistence type="evidence at protein level"/>
<reference key="1">
    <citation type="submission" date="2017-06" db="EMBL/GenBank/DDBJ databases">
        <authorList>
            <person name="Kim H.J."/>
            <person name="Triplett B.A."/>
        </authorList>
    </citation>
    <scope>NUCLEOTIDE SEQUENCE [GENOMIC DNA]</scope>
    <source>
        <strain>6-1-2</strain>
    </source>
</reference>
<reference key="2">
    <citation type="journal article" date="2011" name="Biotechnol. Lett.">
        <title>Heavy oils produced by Aureobasidium pullulans.</title>
        <authorList>
            <person name="Manitchotpisit P."/>
            <person name="Price N.P."/>
            <person name="Leathers T.D."/>
            <person name="Punnapayak H."/>
        </authorList>
    </citation>
    <scope>BIOTECHNOLOGY</scope>
</reference>
<reference key="3">
    <citation type="journal article" date="2019" name="Biotechnol. Rep.">
        <title>Inhibition of Streptococcus mutans and S. sobrinus biofilms by liamocins from Aureobasidium pullulans.</title>
        <authorList>
            <person name="Leathers T.D."/>
            <person name="Rich J.O."/>
            <person name="Bischoff K.M."/>
            <person name="Skory C.D."/>
            <person name="Nunnally M.S."/>
        </authorList>
    </citation>
    <scope>BIOTECHNOLOGY</scope>
</reference>
<reference key="4">
    <citation type="journal article" date="2020" name="Biochem. J.">
        <title>Genetic evidences for the core biosynthesis pathway, regulation, transport and secretion of liamocins in yeast-like fungal cells.</title>
        <authorList>
            <person name="Xue S.J."/>
            <person name="Liu G.L."/>
            <person name="Chi Z."/>
            <person name="Gao Z.C."/>
            <person name="Hu Z."/>
            <person name="Chi Z.M."/>
        </authorList>
    </citation>
    <scope>FUNCTION</scope>
    <scope>DISRUPTION PHENOTYPE</scope>
</reference>
<reference key="5">
    <citation type="journal article" date="2021" name="Enzyme Microb. Technol.">
        <title>cAMP-PKA and HOG1 signaling pathways regulate liamocin production by different ways via the transcriptional activator Msn2 in Aureobasidium melanogenum.</title>
        <authorList>
            <person name="Zhang M."/>
            <person name="Gao Z.C."/>
            <person name="Chi Z."/>
            <person name="Liu G.L."/>
            <person name="Hu Z."/>
            <person name="Chi Z.M."/>
        </authorList>
    </citation>
    <scope>INDUCTION</scope>
</reference>
<name>GLTP_AURME</name>